<name>PDRP2_ENTFA</name>
<gene>
    <name type="ordered locus">EF_2419</name>
</gene>
<evidence type="ECO:0000255" key="1">
    <source>
        <dbReference type="HAMAP-Rule" id="MF_00921"/>
    </source>
</evidence>
<dbReference type="EC" id="2.7.11.32" evidence="1"/>
<dbReference type="EC" id="2.7.4.27" evidence="1"/>
<dbReference type="EMBL" id="AE016830">
    <property type="protein sequence ID" value="AAO82137.1"/>
    <property type="molecule type" value="Genomic_DNA"/>
</dbReference>
<dbReference type="RefSeq" id="NP_816067.1">
    <property type="nucleotide sequence ID" value="NC_004668.1"/>
</dbReference>
<dbReference type="SMR" id="Q831T1"/>
<dbReference type="STRING" id="226185.EF_2419"/>
<dbReference type="EnsemblBacteria" id="AAO82137">
    <property type="protein sequence ID" value="AAO82137"/>
    <property type="gene ID" value="EF_2419"/>
</dbReference>
<dbReference type="KEGG" id="efa:EF2419"/>
<dbReference type="PATRIC" id="fig|226185.9.peg.2257"/>
<dbReference type="eggNOG" id="COG1806">
    <property type="taxonomic scope" value="Bacteria"/>
</dbReference>
<dbReference type="HOGENOM" id="CLU_046206_2_1_9"/>
<dbReference type="Proteomes" id="UP000001415">
    <property type="component" value="Chromosome"/>
</dbReference>
<dbReference type="GO" id="GO:0043531">
    <property type="term" value="F:ADP binding"/>
    <property type="evidence" value="ECO:0007669"/>
    <property type="project" value="UniProtKB-UniRule"/>
</dbReference>
<dbReference type="GO" id="GO:0005524">
    <property type="term" value="F:ATP binding"/>
    <property type="evidence" value="ECO:0007669"/>
    <property type="project" value="InterPro"/>
</dbReference>
<dbReference type="GO" id="GO:0016776">
    <property type="term" value="F:phosphotransferase activity, phosphate group as acceptor"/>
    <property type="evidence" value="ECO:0007669"/>
    <property type="project" value="UniProtKB-UniRule"/>
</dbReference>
<dbReference type="GO" id="GO:0004674">
    <property type="term" value="F:protein serine/threonine kinase activity"/>
    <property type="evidence" value="ECO:0007669"/>
    <property type="project" value="UniProtKB-UniRule"/>
</dbReference>
<dbReference type="Gene3D" id="3.40.50.300">
    <property type="entry name" value="P-loop containing nucleotide triphosphate hydrolases"/>
    <property type="match status" value="1"/>
</dbReference>
<dbReference type="HAMAP" id="MF_00921">
    <property type="entry name" value="PDRP"/>
    <property type="match status" value="1"/>
</dbReference>
<dbReference type="InterPro" id="IPR043129">
    <property type="entry name" value="ATPase_NBD"/>
</dbReference>
<dbReference type="InterPro" id="IPR005177">
    <property type="entry name" value="Kinase-pyrophosphorylase"/>
</dbReference>
<dbReference type="InterPro" id="IPR027417">
    <property type="entry name" value="P-loop_NTPase"/>
</dbReference>
<dbReference type="InterPro" id="IPR026565">
    <property type="entry name" value="PPDK_reg"/>
</dbReference>
<dbReference type="NCBIfam" id="NF003742">
    <property type="entry name" value="PRK05339.1"/>
    <property type="match status" value="1"/>
</dbReference>
<dbReference type="PANTHER" id="PTHR31756">
    <property type="entry name" value="PYRUVATE, PHOSPHATE DIKINASE REGULATORY PROTEIN 1, CHLOROPLASTIC"/>
    <property type="match status" value="1"/>
</dbReference>
<dbReference type="PANTHER" id="PTHR31756:SF3">
    <property type="entry name" value="PYRUVATE, PHOSPHATE DIKINASE REGULATORY PROTEIN 1, CHLOROPLASTIC"/>
    <property type="match status" value="1"/>
</dbReference>
<dbReference type="Pfam" id="PF03618">
    <property type="entry name" value="Kinase-PPPase"/>
    <property type="match status" value="1"/>
</dbReference>
<dbReference type="SUPFAM" id="SSF53067">
    <property type="entry name" value="Actin-like ATPase domain"/>
    <property type="match status" value="1"/>
</dbReference>
<accession>Q831T1</accession>
<organism>
    <name type="scientific">Enterococcus faecalis (strain ATCC 700802 / V583)</name>
    <dbReference type="NCBI Taxonomy" id="226185"/>
    <lineage>
        <taxon>Bacteria</taxon>
        <taxon>Bacillati</taxon>
        <taxon>Bacillota</taxon>
        <taxon>Bacilli</taxon>
        <taxon>Lactobacillales</taxon>
        <taxon>Enterococcaceae</taxon>
        <taxon>Enterococcus</taxon>
    </lineage>
</organism>
<feature type="chain" id="PRO_0000196657" description="Putative pyruvate, phosphate dikinase regulatory protein 2">
    <location>
        <begin position="1"/>
        <end position="276"/>
    </location>
</feature>
<feature type="binding site" evidence="1">
    <location>
        <begin position="146"/>
        <end position="153"/>
    </location>
    <ligand>
        <name>ADP</name>
        <dbReference type="ChEBI" id="CHEBI:456216"/>
    </ligand>
</feature>
<reference key="1">
    <citation type="journal article" date="2003" name="Science">
        <title>Role of mobile DNA in the evolution of vancomycin-resistant Enterococcus faecalis.</title>
        <authorList>
            <person name="Paulsen I.T."/>
            <person name="Banerjei L."/>
            <person name="Myers G.S.A."/>
            <person name="Nelson K.E."/>
            <person name="Seshadri R."/>
            <person name="Read T.D."/>
            <person name="Fouts D.E."/>
            <person name="Eisen J.A."/>
            <person name="Gill S.R."/>
            <person name="Heidelberg J.F."/>
            <person name="Tettelin H."/>
            <person name="Dodson R.J."/>
            <person name="Umayam L.A."/>
            <person name="Brinkac L.M."/>
            <person name="Beanan M.J."/>
            <person name="Daugherty S.C."/>
            <person name="DeBoy R.T."/>
            <person name="Durkin S.A."/>
            <person name="Kolonay J.F."/>
            <person name="Madupu R."/>
            <person name="Nelson W.C."/>
            <person name="Vamathevan J.J."/>
            <person name="Tran B."/>
            <person name="Upton J."/>
            <person name="Hansen T."/>
            <person name="Shetty J."/>
            <person name="Khouri H.M."/>
            <person name="Utterback T.R."/>
            <person name="Radune D."/>
            <person name="Ketchum K.A."/>
            <person name="Dougherty B.A."/>
            <person name="Fraser C.M."/>
        </authorList>
    </citation>
    <scope>NUCLEOTIDE SEQUENCE [LARGE SCALE GENOMIC DNA]</scope>
    <source>
        <strain>ATCC 700802 / V583</strain>
    </source>
</reference>
<protein>
    <recommendedName>
        <fullName evidence="1">Putative pyruvate, phosphate dikinase regulatory protein 2</fullName>
        <shortName evidence="1">PPDK regulatory protein 2</shortName>
        <ecNumber evidence="1">2.7.11.32</ecNumber>
        <ecNumber evidence="1">2.7.4.27</ecNumber>
    </recommendedName>
</protein>
<keyword id="KW-0418">Kinase</keyword>
<keyword id="KW-0547">Nucleotide-binding</keyword>
<keyword id="KW-1185">Reference proteome</keyword>
<keyword id="KW-0723">Serine/threonine-protein kinase</keyword>
<keyword id="KW-0808">Transferase</keyword>
<sequence>MTIFVISDSAGETASKLAAASMAQYPTVDFTLIRRTFVKDEDKLVQALEDAKKAEAMVLHTIINDHLVAIANQFFNEHQLFHFDILTPPVAEIERLTGVAPMREPGALHHLNENYFKRIEAMEFAVKYDDGKDPRGFLEADVLLLGVSRTSKTPLSLFLANKNLKVANLPLIPEAHLPKQLFEMDPKKIVGLTNDPNVLNGIRKERMRAYGLPENTSYSDIEKIRRELAFANDLYQKLGCIVIDVASLSIEETASMILNALNLEDHSYYSTETSED</sequence>
<proteinExistence type="inferred from homology"/>
<comment type="function">
    <text evidence="1">Bifunctional serine/threonine kinase and phosphorylase involved in the regulation of the pyruvate, phosphate dikinase (PPDK) by catalyzing its phosphorylation/dephosphorylation.</text>
</comment>
<comment type="catalytic activity">
    <reaction evidence="1">
        <text>N(tele)-phospho-L-histidyl/L-threonyl-[pyruvate, phosphate dikinase] + ADP = N(tele)-phospho-L-histidyl/O-phospho-L-threonyl-[pyruvate, phosphate dikinase] + AMP + H(+)</text>
        <dbReference type="Rhea" id="RHEA:43692"/>
        <dbReference type="Rhea" id="RHEA-COMP:10650"/>
        <dbReference type="Rhea" id="RHEA-COMP:10651"/>
        <dbReference type="ChEBI" id="CHEBI:15378"/>
        <dbReference type="ChEBI" id="CHEBI:30013"/>
        <dbReference type="ChEBI" id="CHEBI:61977"/>
        <dbReference type="ChEBI" id="CHEBI:83586"/>
        <dbReference type="ChEBI" id="CHEBI:456215"/>
        <dbReference type="ChEBI" id="CHEBI:456216"/>
        <dbReference type="EC" id="2.7.11.32"/>
    </reaction>
</comment>
<comment type="catalytic activity">
    <reaction evidence="1">
        <text>N(tele)-phospho-L-histidyl/O-phospho-L-threonyl-[pyruvate, phosphate dikinase] + phosphate + H(+) = N(tele)-phospho-L-histidyl/L-threonyl-[pyruvate, phosphate dikinase] + diphosphate</text>
        <dbReference type="Rhea" id="RHEA:43696"/>
        <dbReference type="Rhea" id="RHEA-COMP:10650"/>
        <dbReference type="Rhea" id="RHEA-COMP:10651"/>
        <dbReference type="ChEBI" id="CHEBI:15378"/>
        <dbReference type="ChEBI" id="CHEBI:30013"/>
        <dbReference type="ChEBI" id="CHEBI:33019"/>
        <dbReference type="ChEBI" id="CHEBI:43474"/>
        <dbReference type="ChEBI" id="CHEBI:61977"/>
        <dbReference type="ChEBI" id="CHEBI:83586"/>
        <dbReference type="EC" id="2.7.4.27"/>
    </reaction>
</comment>
<comment type="similarity">
    <text evidence="1">Belongs to the pyruvate, phosphate/water dikinase regulatory protein family. PDRP subfamily.</text>
</comment>